<feature type="signal peptide" evidence="2">
    <location>
        <begin position="1"/>
        <end position="20"/>
    </location>
</feature>
<feature type="chain" id="PRO_5003580898" description="Lymphocyte antigen 6L" evidence="2">
    <location>
        <begin position="21"/>
        <end position="116"/>
    </location>
</feature>
<feature type="propeptide" id="PRO_0000438095" description="Removed in mature form" evidence="2">
    <location>
        <begin position="117"/>
        <end position="140"/>
    </location>
</feature>
<feature type="domain" description="UPAR/Ly6" evidence="2">
    <location>
        <begin position="31"/>
        <end position="124"/>
    </location>
</feature>
<feature type="lipid moiety-binding region" description="GPI-anchor amidated serine" evidence="2">
    <location>
        <position position="116"/>
    </location>
</feature>
<feature type="disulfide bond" evidence="1">
    <location>
        <begin position="33"/>
        <end position="50"/>
    </location>
</feature>
<feature type="disulfide bond" evidence="1">
    <location>
        <begin position="105"/>
        <end position="110"/>
    </location>
</feature>
<protein>
    <recommendedName>
        <fullName>Lymphocyte antigen 6L</fullName>
    </recommendedName>
    <alternativeName>
        <fullName>Lymphocyte antigen 6 complex locus protein L</fullName>
    </alternativeName>
</protein>
<dbReference type="EMBL" id="AC121359">
    <property type="status" value="NOT_ANNOTATED_CDS"/>
    <property type="molecule type" value="Genomic_DNA"/>
</dbReference>
<dbReference type="CCDS" id="CCDS84172.1"/>
<dbReference type="RefSeq" id="NP_001333978.1">
    <property type="nucleotide sequence ID" value="NM_001347049.1"/>
</dbReference>
<dbReference type="FunCoup" id="H3BJG9">
    <property type="interactions" value="259"/>
</dbReference>
<dbReference type="STRING" id="10090.ENSMUSP00000134982"/>
<dbReference type="PaxDb" id="10090-ENSMUSP00000134982"/>
<dbReference type="ProteomicsDB" id="291974"/>
<dbReference type="Ensembl" id="ENSMUST00000177479.2">
    <property type="protein sequence ID" value="ENSMUSP00000134982.2"/>
    <property type="gene ID" value="ENSMUSG00000093626.2"/>
</dbReference>
<dbReference type="GeneID" id="102637705"/>
<dbReference type="KEGG" id="mmu:102637705"/>
<dbReference type="AGR" id="MGI:5313101"/>
<dbReference type="CTD" id="101928108"/>
<dbReference type="MGI" id="MGI:5313101">
    <property type="gene designation" value="Ly6l"/>
</dbReference>
<dbReference type="VEuPathDB" id="HostDB:ENSMUSG00000093626"/>
<dbReference type="eggNOG" id="ENOG502TM7T">
    <property type="taxonomic scope" value="Eukaryota"/>
</dbReference>
<dbReference type="GeneTree" id="ENSGT00940000154560"/>
<dbReference type="HOGENOM" id="CLU_106772_1_0_1"/>
<dbReference type="InParanoid" id="H3BJG9"/>
<dbReference type="OMA" id="PRCPNDN"/>
<dbReference type="OrthoDB" id="9799742at2759"/>
<dbReference type="PhylomeDB" id="H3BJG9"/>
<dbReference type="BioGRID-ORCS" id="102637705">
    <property type="hits" value="0 hits in 37 CRISPR screens"/>
</dbReference>
<dbReference type="ChiTaRS" id="Ly6l">
    <property type="organism name" value="mouse"/>
</dbReference>
<dbReference type="PRO" id="PR:H3BJG9"/>
<dbReference type="Proteomes" id="UP000000589">
    <property type="component" value="Chromosome 15"/>
</dbReference>
<dbReference type="RNAct" id="H3BJG9">
    <property type="molecule type" value="protein"/>
</dbReference>
<dbReference type="Bgee" id="ENSMUSG00000093626">
    <property type="expression patterns" value="Expressed in proximal tubule and 1 other cell type or tissue"/>
</dbReference>
<dbReference type="GO" id="GO:0005886">
    <property type="term" value="C:plasma membrane"/>
    <property type="evidence" value="ECO:0007669"/>
    <property type="project" value="UniProtKB-SubCell"/>
</dbReference>
<dbReference type="GO" id="GO:0098552">
    <property type="term" value="C:side of membrane"/>
    <property type="evidence" value="ECO:0007669"/>
    <property type="project" value="UniProtKB-KW"/>
</dbReference>
<dbReference type="CDD" id="cd23551">
    <property type="entry name" value="TFP_LU_ECD_Ly6L"/>
    <property type="match status" value="1"/>
</dbReference>
<dbReference type="Gene3D" id="2.10.60.10">
    <property type="entry name" value="CD59"/>
    <property type="match status" value="1"/>
</dbReference>
<dbReference type="InterPro" id="IPR016054">
    <property type="entry name" value="LY6_UPA_recep-like"/>
</dbReference>
<dbReference type="InterPro" id="IPR051445">
    <property type="entry name" value="LY6H/LY6L_nAChR_modulators"/>
</dbReference>
<dbReference type="InterPro" id="IPR045860">
    <property type="entry name" value="Snake_toxin-like_sf"/>
</dbReference>
<dbReference type="PANTHER" id="PTHR32217">
    <property type="entry name" value="LYMPHOCYTE ANTIGEN 6H"/>
    <property type="match status" value="1"/>
</dbReference>
<dbReference type="PANTHER" id="PTHR32217:SF2">
    <property type="entry name" value="LYMPHOCYTE ANTIGEN 6L"/>
    <property type="match status" value="1"/>
</dbReference>
<dbReference type="Pfam" id="PF00021">
    <property type="entry name" value="UPAR_LY6"/>
    <property type="match status" value="1"/>
</dbReference>
<dbReference type="SMART" id="SM00134">
    <property type="entry name" value="LU"/>
    <property type="match status" value="1"/>
</dbReference>
<dbReference type="SUPFAM" id="SSF57302">
    <property type="entry name" value="Snake toxin-like"/>
    <property type="match status" value="1"/>
</dbReference>
<evidence type="ECO:0000250" key="1">
    <source>
        <dbReference type="UniProtKB" id="Q03405"/>
    </source>
</evidence>
<evidence type="ECO:0000255" key="2"/>
<evidence type="ECO:0000312" key="3">
    <source>
        <dbReference type="MGI" id="MGI:5313101"/>
    </source>
</evidence>
<organism>
    <name type="scientific">Mus musculus</name>
    <name type="common">Mouse</name>
    <dbReference type="NCBI Taxonomy" id="10090"/>
    <lineage>
        <taxon>Eukaryota</taxon>
        <taxon>Metazoa</taxon>
        <taxon>Chordata</taxon>
        <taxon>Craniata</taxon>
        <taxon>Vertebrata</taxon>
        <taxon>Euteleostomi</taxon>
        <taxon>Mammalia</taxon>
        <taxon>Eutheria</taxon>
        <taxon>Euarchontoglires</taxon>
        <taxon>Glires</taxon>
        <taxon>Rodentia</taxon>
        <taxon>Myomorpha</taxon>
        <taxon>Muroidea</taxon>
        <taxon>Muridae</taxon>
        <taxon>Murinae</taxon>
        <taxon>Mus</taxon>
        <taxon>Mus</taxon>
    </lineage>
</organism>
<name>LY6L_MOUSE</name>
<accession>H3BJG9</accession>
<reference key="1">
    <citation type="journal article" date="2009" name="PLoS Biol.">
        <title>Lineage-specific biology revealed by a finished genome assembly of the mouse.</title>
        <authorList>
            <person name="Church D.M."/>
            <person name="Goodstadt L."/>
            <person name="Hillier L.W."/>
            <person name="Zody M.C."/>
            <person name="Goldstein S."/>
            <person name="She X."/>
            <person name="Bult C.J."/>
            <person name="Agarwala R."/>
            <person name="Cherry J.L."/>
            <person name="DiCuccio M."/>
            <person name="Hlavina W."/>
            <person name="Kapustin Y."/>
            <person name="Meric P."/>
            <person name="Maglott D."/>
            <person name="Birtle Z."/>
            <person name="Marques A.C."/>
            <person name="Graves T."/>
            <person name="Zhou S."/>
            <person name="Teague B."/>
            <person name="Potamousis K."/>
            <person name="Churas C."/>
            <person name="Place M."/>
            <person name="Herschleb J."/>
            <person name="Runnheim R."/>
            <person name="Forrest D."/>
            <person name="Amos-Landgraf J."/>
            <person name="Schwartz D.C."/>
            <person name="Cheng Z."/>
            <person name="Lindblad-Toh K."/>
            <person name="Eichler E.E."/>
            <person name="Ponting C.P."/>
        </authorList>
    </citation>
    <scope>NUCLEOTIDE SEQUENCE [LARGE SCALE GENOMIC DNA]</scope>
    <source>
        <strain>C57BL/6J</strain>
    </source>
</reference>
<proteinExistence type="inferred from homology"/>
<comment type="subcellular location">
    <subcellularLocation>
        <location evidence="2">Cell membrane</location>
        <topology evidence="2">Lipid-anchor</topology>
        <topology evidence="2">GPI-anchor</topology>
    </subcellularLocation>
</comment>
<keyword id="KW-1003">Cell membrane</keyword>
<keyword id="KW-1015">Disulfide bond</keyword>
<keyword id="KW-0325">Glycoprotein</keyword>
<keyword id="KW-0336">GPI-anchor</keyword>
<keyword id="KW-0449">Lipoprotein</keyword>
<keyword id="KW-0472">Membrane</keyword>
<keyword id="KW-1185">Reference proteome</keyword>
<keyword id="KW-0732">Signal</keyword>
<gene>
    <name evidence="3" type="primary">Ly6l</name>
    <name evidence="3" type="synonym">Gm20654</name>
</gene>
<sequence>MAPLLLVLWASLVSMELTGGMMVNEVPAQNLSCFECFKVLQASKCHPIECRPNEKVCVSNEVLLYTSTKRRTQISKRCATACPNSNNVIEWSLGNTQARITRRCCSGDRCNRAPGSWEGFWSLPGRLLLPMGLGLFCTLL</sequence>